<comment type="subcellular location">
    <subcellularLocation>
        <location evidence="6">Secreted</location>
    </subcellularLocation>
</comment>
<comment type="alternative products">
    <event type="alternative splicing"/>
    <isoform>
        <id>Q86TE4-1</id>
        <name>1</name>
        <sequence type="displayed"/>
    </isoform>
    <isoform>
        <id>Q86TE4-2</id>
        <name>2</name>
        <sequence type="described" ref="VSP_030520 VSP_030523"/>
    </isoform>
    <isoform>
        <id>Q86TE4-3</id>
        <name>3</name>
        <sequence type="described" ref="VSP_030521 VSP_030522"/>
    </isoform>
    <isoform>
        <id>Q86TE4-4</id>
        <name>4</name>
        <sequence type="described" ref="VSP_044970"/>
    </isoform>
</comment>
<comment type="sequence caution" evidence="6">
    <conflict type="erroneous initiation">
        <sequence resource="EMBL-CDS" id="CAD90000"/>
    </conflict>
</comment>
<evidence type="ECO:0000255" key="1"/>
<evidence type="ECO:0000256" key="2">
    <source>
        <dbReference type="SAM" id="MobiDB-lite"/>
    </source>
</evidence>
<evidence type="ECO:0000303" key="3">
    <source>
    </source>
</evidence>
<evidence type="ECO:0000303" key="4">
    <source>
    </source>
</evidence>
<evidence type="ECO:0000303" key="5">
    <source>
    </source>
</evidence>
<evidence type="ECO:0000305" key="6"/>
<accession>Q86TE4</accession>
<accession>A2RUB8</accession>
<accession>E9PN53</accession>
<accession>Q6UXE7</accession>
<accession>Q6ZS65</accession>
<organism>
    <name type="scientific">Homo sapiens</name>
    <name type="common">Human</name>
    <dbReference type="NCBI Taxonomy" id="9606"/>
    <lineage>
        <taxon>Eukaryota</taxon>
        <taxon>Metazoa</taxon>
        <taxon>Chordata</taxon>
        <taxon>Craniata</taxon>
        <taxon>Vertebrata</taxon>
        <taxon>Euteleostomi</taxon>
        <taxon>Mammalia</taxon>
        <taxon>Eutheria</taxon>
        <taxon>Euarchontoglires</taxon>
        <taxon>Primates</taxon>
        <taxon>Haplorrhini</taxon>
        <taxon>Catarrhini</taxon>
        <taxon>Hominidae</taxon>
        <taxon>Homo</taxon>
    </lineage>
</organism>
<dbReference type="EMBL" id="AY358386">
    <property type="protein sequence ID" value="AAQ88752.1"/>
    <property type="molecule type" value="mRNA"/>
</dbReference>
<dbReference type="EMBL" id="AK127695">
    <property type="protein sequence ID" value="BAC87089.1"/>
    <property type="molecule type" value="mRNA"/>
</dbReference>
<dbReference type="EMBL" id="AL832641">
    <property type="protein sequence ID" value="CAD90000.1"/>
    <property type="status" value="ALT_INIT"/>
    <property type="molecule type" value="mRNA"/>
</dbReference>
<dbReference type="EMBL" id="AC023869">
    <property type="status" value="NOT_ANNOTATED_CDS"/>
    <property type="molecule type" value="Genomic_DNA"/>
</dbReference>
<dbReference type="EMBL" id="AC040968">
    <property type="status" value="NOT_ANNOTATED_CDS"/>
    <property type="molecule type" value="Genomic_DNA"/>
</dbReference>
<dbReference type="EMBL" id="AC067902">
    <property type="status" value="NOT_ANNOTATED_CDS"/>
    <property type="molecule type" value="Genomic_DNA"/>
</dbReference>
<dbReference type="EMBL" id="AC087373">
    <property type="status" value="NOT_ANNOTATED_CDS"/>
    <property type="molecule type" value="Genomic_DNA"/>
</dbReference>
<dbReference type="EMBL" id="AC115990">
    <property type="status" value="NOT_ANNOTATED_CDS"/>
    <property type="molecule type" value="Genomic_DNA"/>
</dbReference>
<dbReference type="EMBL" id="AC135168">
    <property type="status" value="NOT_ANNOTATED_CDS"/>
    <property type="molecule type" value="Genomic_DNA"/>
</dbReference>
<dbReference type="EMBL" id="BC132829">
    <property type="protein sequence ID" value="AAI32830.1"/>
    <property type="molecule type" value="mRNA"/>
</dbReference>
<dbReference type="EMBL" id="BC151234">
    <property type="status" value="NOT_ANNOTATED_CDS"/>
    <property type="molecule type" value="mRNA"/>
</dbReference>
<dbReference type="CCDS" id="CCDS31446.1">
    <molecule id="Q86TE4-1"/>
</dbReference>
<dbReference type="CCDS" id="CCDS58128.1">
    <molecule id="Q86TE4-4"/>
</dbReference>
<dbReference type="RefSeq" id="NP_001009909.2">
    <molecule id="Q86TE4-1"/>
    <property type="nucleotide sequence ID" value="NM_001009909.4"/>
</dbReference>
<dbReference type="RefSeq" id="NP_001238937.1">
    <molecule id="Q86TE4-4"/>
    <property type="nucleotide sequence ID" value="NM_001252008.2"/>
</dbReference>
<dbReference type="RefSeq" id="NP_001238939.1">
    <property type="nucleotide sequence ID" value="NM_001252010.1"/>
</dbReference>
<dbReference type="RefSeq" id="XP_016873140.1">
    <property type="nucleotide sequence ID" value="XM_017017651.1"/>
</dbReference>
<dbReference type="RefSeq" id="XP_047282827.1">
    <molecule id="Q86TE4-3"/>
    <property type="nucleotide sequence ID" value="XM_047426871.1"/>
</dbReference>
<dbReference type="RefSeq" id="XP_054224601.1">
    <molecule id="Q86TE4-3"/>
    <property type="nucleotide sequence ID" value="XM_054368626.1"/>
</dbReference>
<dbReference type="SMR" id="Q86TE4"/>
<dbReference type="BioGRID" id="130772">
    <property type="interactions" value="2"/>
</dbReference>
<dbReference type="FunCoup" id="Q86TE4">
    <property type="interactions" value="62"/>
</dbReference>
<dbReference type="IntAct" id="Q86TE4">
    <property type="interactions" value="3"/>
</dbReference>
<dbReference type="STRING" id="9606.ENSP00000336817"/>
<dbReference type="GlyCosmos" id="Q86TE4">
    <property type="glycosylation" value="3 sites, No reported glycans"/>
</dbReference>
<dbReference type="GlyGen" id="Q86TE4">
    <property type="glycosylation" value="4 sites, 2 N-linked glycans (1 site), 1 O-linked glycan (1 site)"/>
</dbReference>
<dbReference type="iPTMnet" id="Q86TE4"/>
<dbReference type="PhosphoSitePlus" id="Q86TE4"/>
<dbReference type="BioMuta" id="LUZP2"/>
<dbReference type="DMDM" id="166232937"/>
<dbReference type="jPOST" id="Q86TE4"/>
<dbReference type="MassIVE" id="Q86TE4"/>
<dbReference type="PaxDb" id="9606-ENSP00000336817"/>
<dbReference type="PeptideAtlas" id="Q86TE4"/>
<dbReference type="ProteomicsDB" id="22310"/>
<dbReference type="ProteomicsDB" id="69688">
    <molecule id="Q86TE4-1"/>
</dbReference>
<dbReference type="ProteomicsDB" id="69689">
    <molecule id="Q86TE4-2"/>
</dbReference>
<dbReference type="ProteomicsDB" id="69690">
    <molecule id="Q86TE4-3"/>
</dbReference>
<dbReference type="Antibodypedia" id="64358">
    <property type="antibodies" value="90 antibodies from 17 providers"/>
</dbReference>
<dbReference type="DNASU" id="338645"/>
<dbReference type="Ensembl" id="ENST00000336930.11">
    <molecule id="Q86TE4-1"/>
    <property type="protein sequence ID" value="ENSP00000336817.6"/>
    <property type="gene ID" value="ENSG00000187398.12"/>
</dbReference>
<dbReference type="Ensembl" id="ENST00000533227.5">
    <molecule id="Q86TE4-4"/>
    <property type="protein sequence ID" value="ENSP00000432952.1"/>
    <property type="gene ID" value="ENSG00000187398.12"/>
</dbReference>
<dbReference type="Ensembl" id="ENST00000620308.1">
    <molecule id="Q86TE4-4"/>
    <property type="protein sequence ID" value="ENSP00000480441.1"/>
    <property type="gene ID" value="ENSG00000187398.12"/>
</dbReference>
<dbReference type="GeneID" id="338645"/>
<dbReference type="KEGG" id="hsa:338645"/>
<dbReference type="MANE-Select" id="ENST00000336930.11">
    <property type="protein sequence ID" value="ENSP00000336817.6"/>
    <property type="RefSeq nucleotide sequence ID" value="NM_001009909.4"/>
    <property type="RefSeq protein sequence ID" value="NP_001009909.2"/>
</dbReference>
<dbReference type="UCSC" id="uc001mqs.4">
    <molecule id="Q86TE4-1"/>
    <property type="organism name" value="human"/>
</dbReference>
<dbReference type="AGR" id="HGNC:23206"/>
<dbReference type="CTD" id="338645"/>
<dbReference type="DisGeNET" id="338645"/>
<dbReference type="GeneCards" id="LUZP2"/>
<dbReference type="HGNC" id="HGNC:23206">
    <property type="gene designation" value="LUZP2"/>
</dbReference>
<dbReference type="HPA" id="ENSG00000187398">
    <property type="expression patterns" value="Group enriched (adrenal gland, brain)"/>
</dbReference>
<dbReference type="MIM" id="608178">
    <property type="type" value="gene"/>
</dbReference>
<dbReference type="neXtProt" id="NX_Q86TE4"/>
<dbReference type="OpenTargets" id="ENSG00000187398"/>
<dbReference type="PharmGKB" id="PA28445"/>
<dbReference type="VEuPathDB" id="HostDB:ENSG00000187398"/>
<dbReference type="eggNOG" id="ENOG502QV95">
    <property type="taxonomic scope" value="Eukaryota"/>
</dbReference>
<dbReference type="GeneTree" id="ENSGT00390000013180"/>
<dbReference type="HOGENOM" id="CLU_068900_0_0_1"/>
<dbReference type="InParanoid" id="Q86TE4"/>
<dbReference type="OMA" id="EGKTCSM"/>
<dbReference type="OrthoDB" id="8767066at2759"/>
<dbReference type="PAN-GO" id="Q86TE4">
    <property type="GO annotations" value="0 GO annotations based on evolutionary models"/>
</dbReference>
<dbReference type="PhylomeDB" id="Q86TE4"/>
<dbReference type="TreeFam" id="TF331644"/>
<dbReference type="PathwayCommons" id="Q86TE4"/>
<dbReference type="SignaLink" id="Q86TE4"/>
<dbReference type="BioGRID-ORCS" id="338645">
    <property type="hits" value="14 hits in 1139 CRISPR screens"/>
</dbReference>
<dbReference type="ChiTaRS" id="LUZP2">
    <property type="organism name" value="human"/>
</dbReference>
<dbReference type="GenomeRNAi" id="338645"/>
<dbReference type="Pharos" id="Q86TE4">
    <property type="development level" value="Tdark"/>
</dbReference>
<dbReference type="PRO" id="PR:Q86TE4"/>
<dbReference type="Proteomes" id="UP000005640">
    <property type="component" value="Chromosome 11"/>
</dbReference>
<dbReference type="RNAct" id="Q86TE4">
    <property type="molecule type" value="protein"/>
</dbReference>
<dbReference type="Bgee" id="ENSG00000187398">
    <property type="expression patterns" value="Expressed in adrenal tissue and 109 other cell types or tissues"/>
</dbReference>
<dbReference type="ExpressionAtlas" id="Q86TE4">
    <property type="expression patterns" value="baseline and differential"/>
</dbReference>
<dbReference type="GO" id="GO:0005576">
    <property type="term" value="C:extracellular region"/>
    <property type="evidence" value="ECO:0007669"/>
    <property type="project" value="UniProtKB-SubCell"/>
</dbReference>
<dbReference type="InterPro" id="IPR026718">
    <property type="entry name" value="Luzp2"/>
</dbReference>
<dbReference type="PANTHER" id="PTHR22414">
    <property type="entry name" value="LEUCINE ZIPPER PROTEIN 2"/>
    <property type="match status" value="1"/>
</dbReference>
<dbReference type="PANTHER" id="PTHR22414:SF0">
    <property type="entry name" value="LEUCINE ZIPPER PROTEIN 2"/>
    <property type="match status" value="1"/>
</dbReference>
<feature type="signal peptide" evidence="1">
    <location>
        <begin position="1"/>
        <end position="19"/>
    </location>
</feature>
<feature type="chain" id="PRO_0000315274" description="Leucine zipper protein 2">
    <location>
        <begin position="20"/>
        <end position="346"/>
    </location>
</feature>
<feature type="region of interest" description="Leucine-zipper">
    <location>
        <begin position="164"/>
        <end position="192"/>
    </location>
</feature>
<feature type="region of interest" description="Disordered" evidence="2">
    <location>
        <begin position="221"/>
        <end position="240"/>
    </location>
</feature>
<feature type="region of interest" description="Disordered" evidence="2">
    <location>
        <begin position="248"/>
        <end position="346"/>
    </location>
</feature>
<feature type="coiled-coil region" evidence="1">
    <location>
        <begin position="16"/>
        <end position="211"/>
    </location>
</feature>
<feature type="compositionally biased region" description="Low complexity" evidence="2">
    <location>
        <begin position="250"/>
        <end position="261"/>
    </location>
</feature>
<feature type="compositionally biased region" description="Polar residues" evidence="2">
    <location>
        <begin position="262"/>
        <end position="283"/>
    </location>
</feature>
<feature type="compositionally biased region" description="Basic and acidic residues" evidence="2">
    <location>
        <begin position="286"/>
        <end position="298"/>
    </location>
</feature>
<feature type="glycosylation site" description="N-linked (GlcNAc...) asparagine" evidence="1">
    <location>
        <position position="133"/>
    </location>
</feature>
<feature type="glycosylation site" description="N-linked (GlcNAc...) asparagine" evidence="1">
    <location>
        <position position="264"/>
    </location>
</feature>
<feature type="glycosylation site" description="N-linked (GlcNAc...) asparagine" evidence="1">
    <location>
        <position position="302"/>
    </location>
</feature>
<feature type="splice variant" id="VSP_044970" description="In isoform 4." evidence="5">
    <location>
        <begin position="1"/>
        <end position="86"/>
    </location>
</feature>
<feature type="splice variant" id="VSP_030520" description="In isoform 2." evidence="3">
    <original>NKSLKNKLLSGNKLCGIHAEESKKIQA</original>
    <variation>DSRKRPRDLQWKIVSMRTMSIYLLMYL</variation>
    <location>
        <begin position="133"/>
        <end position="159"/>
    </location>
</feature>
<feature type="splice variant" id="VSP_030521" description="In isoform 3." evidence="4">
    <original>NKSL</original>
    <variation>VIQI</variation>
    <location>
        <begin position="133"/>
        <end position="136"/>
    </location>
</feature>
<feature type="splice variant" id="VSP_030522" description="In isoform 3." evidence="4">
    <location>
        <begin position="137"/>
        <end position="346"/>
    </location>
</feature>
<feature type="splice variant" id="VSP_030523" description="In isoform 2." evidence="3">
    <location>
        <begin position="160"/>
        <end position="346"/>
    </location>
</feature>
<feature type="sequence variant" id="VAR_038165" description="In dbSNP:rs7930185.">
    <original>E</original>
    <variation>Q</variation>
    <location>
        <position position="308"/>
    </location>
</feature>
<name>LUZP2_HUMAN</name>
<protein>
    <recommendedName>
        <fullName>Leucine zipper protein 2</fullName>
    </recommendedName>
</protein>
<gene>
    <name type="primary">LUZP2</name>
    <name type="ORF">UNQ2566/PRO6246</name>
</gene>
<keyword id="KW-0025">Alternative splicing</keyword>
<keyword id="KW-0175">Coiled coil</keyword>
<keyword id="KW-0325">Glycoprotein</keyword>
<keyword id="KW-1267">Proteomics identification</keyword>
<keyword id="KW-1185">Reference proteome</keyword>
<keyword id="KW-0964">Secreted</keyword>
<keyword id="KW-0732">Signal</keyword>
<sequence>MKFSPAHYLLPLLPALVLSTRQDYEELEKQLKEVFKERSTILRQLTKTSRELDGIKVNLQSLKNDEQSAKTDVQKLLELGQKQREEMKSLQEALQNQLKETSEKAEKHQATINFLKTEVERKSKMIRDLQNENKSLKNKLLSGNKLCGIHAEESKKIQAQLKELRYGKKDLLFKAQQLTDLEQKLAVAKNELEKAALDRESQMKAMKETVQLCLTSVFRDQPPPPLSLITSNPTRMLLPPRNIASKLPDAAAKSKPQQSASGNNESSQVESTKEGNPSTTACDSQDEGRPCSMKHKESPPSNATAETEPIPQKLQMPPCSECEVKKAPEKPLTSFEGMAAREEKIL</sequence>
<reference key="1">
    <citation type="journal article" date="2003" name="Genome Res.">
        <title>The secreted protein discovery initiative (SPDI), a large-scale effort to identify novel human secreted and transmembrane proteins: a bioinformatics assessment.</title>
        <authorList>
            <person name="Clark H.F."/>
            <person name="Gurney A.L."/>
            <person name="Abaya E."/>
            <person name="Baker K."/>
            <person name="Baldwin D.T."/>
            <person name="Brush J."/>
            <person name="Chen J."/>
            <person name="Chow B."/>
            <person name="Chui C."/>
            <person name="Crowley C."/>
            <person name="Currell B."/>
            <person name="Deuel B."/>
            <person name="Dowd P."/>
            <person name="Eaton D."/>
            <person name="Foster J.S."/>
            <person name="Grimaldi C."/>
            <person name="Gu Q."/>
            <person name="Hass P.E."/>
            <person name="Heldens S."/>
            <person name="Huang A."/>
            <person name="Kim H.S."/>
            <person name="Klimowski L."/>
            <person name="Jin Y."/>
            <person name="Johnson S."/>
            <person name="Lee J."/>
            <person name="Lewis L."/>
            <person name="Liao D."/>
            <person name="Mark M.R."/>
            <person name="Robbie E."/>
            <person name="Sanchez C."/>
            <person name="Schoenfeld J."/>
            <person name="Seshagiri S."/>
            <person name="Simmons L."/>
            <person name="Singh J."/>
            <person name="Smith V."/>
            <person name="Stinson J."/>
            <person name="Vagts A."/>
            <person name="Vandlen R.L."/>
            <person name="Watanabe C."/>
            <person name="Wieand D."/>
            <person name="Woods K."/>
            <person name="Xie M.-H."/>
            <person name="Yansura D.G."/>
            <person name="Yi S."/>
            <person name="Yu G."/>
            <person name="Yuan J."/>
            <person name="Zhang M."/>
            <person name="Zhang Z."/>
            <person name="Goddard A.D."/>
            <person name="Wood W.I."/>
            <person name="Godowski P.J."/>
            <person name="Gray A.M."/>
        </authorList>
    </citation>
    <scope>NUCLEOTIDE SEQUENCE [LARGE SCALE MRNA] (ISOFORM 2)</scope>
</reference>
<reference key="2">
    <citation type="journal article" date="2004" name="Nat. Genet.">
        <title>Complete sequencing and characterization of 21,243 full-length human cDNAs.</title>
        <authorList>
            <person name="Ota T."/>
            <person name="Suzuki Y."/>
            <person name="Nishikawa T."/>
            <person name="Otsuki T."/>
            <person name="Sugiyama T."/>
            <person name="Irie R."/>
            <person name="Wakamatsu A."/>
            <person name="Hayashi K."/>
            <person name="Sato H."/>
            <person name="Nagai K."/>
            <person name="Kimura K."/>
            <person name="Makita H."/>
            <person name="Sekine M."/>
            <person name="Obayashi M."/>
            <person name="Nishi T."/>
            <person name="Shibahara T."/>
            <person name="Tanaka T."/>
            <person name="Ishii S."/>
            <person name="Yamamoto J."/>
            <person name="Saito K."/>
            <person name="Kawai Y."/>
            <person name="Isono Y."/>
            <person name="Nakamura Y."/>
            <person name="Nagahari K."/>
            <person name="Murakami K."/>
            <person name="Yasuda T."/>
            <person name="Iwayanagi T."/>
            <person name="Wagatsuma M."/>
            <person name="Shiratori A."/>
            <person name="Sudo H."/>
            <person name="Hosoiri T."/>
            <person name="Kaku Y."/>
            <person name="Kodaira H."/>
            <person name="Kondo H."/>
            <person name="Sugawara M."/>
            <person name="Takahashi M."/>
            <person name="Kanda K."/>
            <person name="Yokoi T."/>
            <person name="Furuya T."/>
            <person name="Kikkawa E."/>
            <person name="Omura Y."/>
            <person name="Abe K."/>
            <person name="Kamihara K."/>
            <person name="Katsuta N."/>
            <person name="Sato K."/>
            <person name="Tanikawa M."/>
            <person name="Yamazaki M."/>
            <person name="Ninomiya K."/>
            <person name="Ishibashi T."/>
            <person name="Yamashita H."/>
            <person name="Murakawa K."/>
            <person name="Fujimori K."/>
            <person name="Tanai H."/>
            <person name="Kimata M."/>
            <person name="Watanabe M."/>
            <person name="Hiraoka S."/>
            <person name="Chiba Y."/>
            <person name="Ishida S."/>
            <person name="Ono Y."/>
            <person name="Takiguchi S."/>
            <person name="Watanabe S."/>
            <person name="Yosida M."/>
            <person name="Hotuta T."/>
            <person name="Kusano J."/>
            <person name="Kanehori K."/>
            <person name="Takahashi-Fujii A."/>
            <person name="Hara H."/>
            <person name="Tanase T.-O."/>
            <person name="Nomura Y."/>
            <person name="Togiya S."/>
            <person name="Komai F."/>
            <person name="Hara R."/>
            <person name="Takeuchi K."/>
            <person name="Arita M."/>
            <person name="Imose N."/>
            <person name="Musashino K."/>
            <person name="Yuuki H."/>
            <person name="Oshima A."/>
            <person name="Sasaki N."/>
            <person name="Aotsuka S."/>
            <person name="Yoshikawa Y."/>
            <person name="Matsunawa H."/>
            <person name="Ichihara T."/>
            <person name="Shiohata N."/>
            <person name="Sano S."/>
            <person name="Moriya S."/>
            <person name="Momiyama H."/>
            <person name="Satoh N."/>
            <person name="Takami S."/>
            <person name="Terashima Y."/>
            <person name="Suzuki O."/>
            <person name="Nakagawa S."/>
            <person name="Senoh A."/>
            <person name="Mizoguchi H."/>
            <person name="Goto Y."/>
            <person name="Shimizu F."/>
            <person name="Wakebe H."/>
            <person name="Hishigaki H."/>
            <person name="Watanabe T."/>
            <person name="Sugiyama A."/>
            <person name="Takemoto M."/>
            <person name="Kawakami B."/>
            <person name="Yamazaki M."/>
            <person name="Watanabe K."/>
            <person name="Kumagai A."/>
            <person name="Itakura S."/>
            <person name="Fukuzumi Y."/>
            <person name="Fujimori Y."/>
            <person name="Komiyama M."/>
            <person name="Tashiro H."/>
            <person name="Tanigami A."/>
            <person name="Fujiwara T."/>
            <person name="Ono T."/>
            <person name="Yamada K."/>
            <person name="Fujii Y."/>
            <person name="Ozaki K."/>
            <person name="Hirao M."/>
            <person name="Ohmori Y."/>
            <person name="Kawabata A."/>
            <person name="Hikiji T."/>
            <person name="Kobatake N."/>
            <person name="Inagaki H."/>
            <person name="Ikema Y."/>
            <person name="Okamoto S."/>
            <person name="Okitani R."/>
            <person name="Kawakami T."/>
            <person name="Noguchi S."/>
            <person name="Itoh T."/>
            <person name="Shigeta K."/>
            <person name="Senba T."/>
            <person name="Matsumura K."/>
            <person name="Nakajima Y."/>
            <person name="Mizuno T."/>
            <person name="Morinaga M."/>
            <person name="Sasaki M."/>
            <person name="Togashi T."/>
            <person name="Oyama M."/>
            <person name="Hata H."/>
            <person name="Watanabe M."/>
            <person name="Komatsu T."/>
            <person name="Mizushima-Sugano J."/>
            <person name="Satoh T."/>
            <person name="Shirai Y."/>
            <person name="Takahashi Y."/>
            <person name="Nakagawa K."/>
            <person name="Okumura K."/>
            <person name="Nagase T."/>
            <person name="Nomura N."/>
            <person name="Kikuchi H."/>
            <person name="Masuho Y."/>
            <person name="Yamashita R."/>
            <person name="Nakai K."/>
            <person name="Yada T."/>
            <person name="Nakamura Y."/>
            <person name="Ohara O."/>
            <person name="Isogai T."/>
            <person name="Sugano S."/>
        </authorList>
    </citation>
    <scope>NUCLEOTIDE SEQUENCE [LARGE SCALE MRNA] (ISOFORM 3)</scope>
</reference>
<reference key="3">
    <citation type="journal article" date="2007" name="BMC Genomics">
        <title>The full-ORF clone resource of the German cDNA consortium.</title>
        <authorList>
            <person name="Bechtel S."/>
            <person name="Rosenfelder H."/>
            <person name="Duda A."/>
            <person name="Schmidt C.P."/>
            <person name="Ernst U."/>
            <person name="Wellenreuther R."/>
            <person name="Mehrle A."/>
            <person name="Schuster C."/>
            <person name="Bahr A."/>
            <person name="Bloecker H."/>
            <person name="Heubner D."/>
            <person name="Hoerlein A."/>
            <person name="Michel G."/>
            <person name="Wedler H."/>
            <person name="Koehrer K."/>
            <person name="Ottenwaelder B."/>
            <person name="Poustka A."/>
            <person name="Wiemann S."/>
            <person name="Schupp I."/>
        </authorList>
    </citation>
    <scope>NUCLEOTIDE SEQUENCE [LARGE SCALE MRNA] (ISOFORM 1)</scope>
    <source>
        <tissue>Spinal cord</tissue>
    </source>
</reference>
<reference key="4">
    <citation type="journal article" date="2006" name="Nature">
        <title>Human chromosome 11 DNA sequence and analysis including novel gene identification.</title>
        <authorList>
            <person name="Taylor T.D."/>
            <person name="Noguchi H."/>
            <person name="Totoki Y."/>
            <person name="Toyoda A."/>
            <person name="Kuroki Y."/>
            <person name="Dewar K."/>
            <person name="Lloyd C."/>
            <person name="Itoh T."/>
            <person name="Takeda T."/>
            <person name="Kim D.-W."/>
            <person name="She X."/>
            <person name="Barlow K.F."/>
            <person name="Bloom T."/>
            <person name="Bruford E."/>
            <person name="Chang J.L."/>
            <person name="Cuomo C.A."/>
            <person name="Eichler E."/>
            <person name="FitzGerald M.G."/>
            <person name="Jaffe D.B."/>
            <person name="LaButti K."/>
            <person name="Nicol R."/>
            <person name="Park H.-S."/>
            <person name="Seaman C."/>
            <person name="Sougnez C."/>
            <person name="Yang X."/>
            <person name="Zimmer A.R."/>
            <person name="Zody M.C."/>
            <person name="Birren B.W."/>
            <person name="Nusbaum C."/>
            <person name="Fujiyama A."/>
            <person name="Hattori M."/>
            <person name="Rogers J."/>
            <person name="Lander E.S."/>
            <person name="Sakaki Y."/>
        </authorList>
    </citation>
    <scope>NUCLEOTIDE SEQUENCE [LARGE SCALE GENOMIC DNA]</scope>
</reference>
<reference key="5">
    <citation type="journal article" date="2004" name="Genome Res.">
        <title>The status, quality, and expansion of the NIH full-length cDNA project: the Mammalian Gene Collection (MGC).</title>
        <authorList>
            <consortium name="The MGC Project Team"/>
        </authorList>
    </citation>
    <scope>NUCLEOTIDE SEQUENCE [LARGE SCALE MRNA] (ISOFORMS 1 AND 4)</scope>
</reference>
<proteinExistence type="evidence at protein level"/>